<name>IP21_TOBAC</name>
<evidence type="ECO:0000250" key="1"/>
<evidence type="ECO:0000255" key="2"/>
<evidence type="ECO:0000305" key="3"/>
<dbReference type="EMBL" id="Z29537">
    <property type="protein sequence ID" value="CAA82652.1"/>
    <property type="molecule type" value="Genomic_DNA"/>
</dbReference>
<dbReference type="PIR" id="S56662">
    <property type="entry name" value="S56662"/>
</dbReference>
<dbReference type="RefSeq" id="NP_001412869.1">
    <property type="nucleotide sequence ID" value="NM_001425940.1"/>
</dbReference>
<dbReference type="RefSeq" id="XP_016497298.1">
    <property type="nucleotide sequence ID" value="XM_016641812.1"/>
</dbReference>
<dbReference type="SMR" id="Q40561"/>
<dbReference type="MEROPS" id="I20.002"/>
<dbReference type="MEROPS" id="I20.951"/>
<dbReference type="MEROPS" id="I20.952"/>
<dbReference type="PaxDb" id="4097-Q40561"/>
<dbReference type="GeneID" id="107816122"/>
<dbReference type="KEGG" id="nta:107816122"/>
<dbReference type="OMA" id="QECINCC"/>
<dbReference type="OrthoDB" id="1280646at2759"/>
<dbReference type="PhylomeDB" id="Q40561"/>
<dbReference type="Proteomes" id="UP000084051">
    <property type="component" value="Unplaced"/>
</dbReference>
<dbReference type="GO" id="GO:0004867">
    <property type="term" value="F:serine-type endopeptidase inhibitor activity"/>
    <property type="evidence" value="ECO:0007669"/>
    <property type="project" value="UniProtKB-KW"/>
</dbReference>
<dbReference type="Gene3D" id="3.30.60.30">
    <property type="match status" value="3"/>
</dbReference>
<dbReference type="InterPro" id="IPR003465">
    <property type="entry name" value="Prot_inh_I20"/>
</dbReference>
<dbReference type="InterPro" id="IPR051391">
    <property type="entry name" value="Protease_inhibitor_I20"/>
</dbReference>
<dbReference type="PANTHER" id="PTHR33832:SF17">
    <property type="entry name" value="PROTEINASE INHIBITOR TYPE-2"/>
    <property type="match status" value="1"/>
</dbReference>
<dbReference type="PANTHER" id="PTHR33832">
    <property type="entry name" value="SERINE-TYPE ENDOPEPTIDASE INHIBITOR"/>
    <property type="match status" value="1"/>
</dbReference>
<dbReference type="Pfam" id="PF02428">
    <property type="entry name" value="Prot_inhib_II"/>
    <property type="match status" value="3"/>
</dbReference>
<dbReference type="SUPFAM" id="SSF100897">
    <property type="entry name" value="Plant proteinase inhibitors"/>
    <property type="match status" value="2"/>
</dbReference>
<accession>Q40561</accession>
<keyword id="KW-1015">Disulfide bond</keyword>
<keyword id="KW-0646">Protease inhibitor</keyword>
<keyword id="KW-1185">Reference proteome</keyword>
<keyword id="KW-0677">Repeat</keyword>
<keyword id="KW-0722">Serine protease inhibitor</keyword>
<keyword id="KW-0732">Signal</keyword>
<reference key="1">
    <citation type="journal article" date="1995" name="Plant Mol. Biol.">
        <title>Structure and induction pattern of a novel proteinase inhibitor class II gene of tobacco.</title>
        <authorList>
            <person name="Balandin M.T."/>
            <person name="van der Does C."/>
            <person name="Albert J.M."/>
            <person name="Bol J.F."/>
            <person name="Linthorst H.J.M."/>
        </authorList>
    </citation>
    <scope>NUCLEOTIDE SEQUENCE [GENOMIC DNA]</scope>
    <source>
        <strain>cv. Samsun NN</strain>
        <tissue>Leaf</tissue>
    </source>
</reference>
<feature type="signal peptide" evidence="2">
    <location>
        <begin position="1"/>
        <end position="24"/>
    </location>
</feature>
<feature type="chain" id="PRO_0000025320" description="Proteinase inhibitor type-2">
    <location>
        <begin position="25"/>
        <end position="197"/>
    </location>
</feature>
<feature type="repeat" description="1">
    <location>
        <begin position="24"/>
        <end position="80"/>
    </location>
</feature>
<feature type="repeat" description="2">
    <location>
        <begin position="81"/>
        <end position="140"/>
    </location>
</feature>
<feature type="repeat" description="3">
    <location>
        <begin position="141"/>
        <end position="196"/>
    </location>
</feature>
<feature type="site" description="Reactive bond for trypsin" evidence="2">
    <location>
        <begin position="29"/>
        <end position="30"/>
    </location>
</feature>
<feature type="disulfide bond" evidence="1">
    <location>
        <begin position="27"/>
        <end position="115"/>
    </location>
</feature>
<feature type="disulfide bond" evidence="1">
    <location>
        <begin position="31"/>
        <end position="111"/>
    </location>
</feature>
<feature type="disulfide bond" evidence="1">
    <location>
        <begin position="39"/>
        <end position="121"/>
    </location>
</feature>
<feature type="disulfide bond" evidence="1">
    <location>
        <begin position="51"/>
        <end position="88"/>
    </location>
</feature>
<feature type="disulfide bond" evidence="1">
    <location>
        <begin position="54"/>
        <end position="72"/>
    </location>
</feature>
<feature type="disulfide bond" evidence="1">
    <location>
        <begin position="55"/>
        <end position="84"/>
    </location>
</feature>
<feature type="disulfide bond" evidence="1">
    <location>
        <begin position="61"/>
        <end position="97"/>
    </location>
</feature>
<feature type="disulfide bond" evidence="1">
    <location>
        <begin position="114"/>
        <end position="132"/>
    </location>
</feature>
<protein>
    <recommendedName>
        <fullName>Proteinase inhibitor type-2</fullName>
    </recommendedName>
    <alternativeName>
        <fullName>Proteinase inhibitor type II</fullName>
    </alternativeName>
</protein>
<organism>
    <name type="scientific">Nicotiana tabacum</name>
    <name type="common">Common tobacco</name>
    <dbReference type="NCBI Taxonomy" id="4097"/>
    <lineage>
        <taxon>Eukaryota</taxon>
        <taxon>Viridiplantae</taxon>
        <taxon>Streptophyta</taxon>
        <taxon>Embryophyta</taxon>
        <taxon>Tracheophyta</taxon>
        <taxon>Spermatophyta</taxon>
        <taxon>Magnoliopsida</taxon>
        <taxon>eudicotyledons</taxon>
        <taxon>Gunneridae</taxon>
        <taxon>Pentapetalae</taxon>
        <taxon>asterids</taxon>
        <taxon>lamiids</taxon>
        <taxon>Solanales</taxon>
        <taxon>Solanaceae</taxon>
        <taxon>Nicotianoideae</taxon>
        <taxon>Nicotianeae</taxon>
        <taxon>Nicotiana</taxon>
    </lineage>
</organism>
<comment type="induction">
    <text>Locally induced in leaves subjected to different types of stress (TMV infection, wounding, UV irradiation).</text>
</comment>
<comment type="similarity">
    <text evidence="3">Belongs to the protease inhibitor I20 (potato type II proteinase inhibitor) family.</text>
</comment>
<proteinExistence type="evidence at transcript level"/>
<sequence length="197" mass="20985">MAVHKVSFVAHLLVLGMFLLLVDAKACTKECGNFAYGICPRSQGTPDDPICTTCCAGYKGCNYYSANGTFICEGSSDPKNPNVCPQFCDPDIAYSKCPRSEGETIINPTGCTTCCTGYKGCYYFGQDGEFVCEGESDEPKSCTTECDPRVATISCPFSGLVKINQECINCCNADKGCELYDNDGSLICTGGEPQSAA</sequence>